<name>YYBF_BACSU</name>
<reference key="1">
    <citation type="journal article" date="1994" name="DNA Res.">
        <title>Systematic sequencing of the 180 kilobase region of the Bacillus subtilis chromosome containing the replication origin.</title>
        <authorList>
            <person name="Ogasawara N."/>
            <person name="Nakai S."/>
            <person name="Yoshikawa H."/>
        </authorList>
    </citation>
    <scope>NUCLEOTIDE SEQUENCE [GENOMIC DNA]</scope>
    <source>
        <strain>168</strain>
    </source>
</reference>
<reference key="2">
    <citation type="journal article" date="1997" name="Nature">
        <title>The complete genome sequence of the Gram-positive bacterium Bacillus subtilis.</title>
        <authorList>
            <person name="Kunst F."/>
            <person name="Ogasawara N."/>
            <person name="Moszer I."/>
            <person name="Albertini A.M."/>
            <person name="Alloni G."/>
            <person name="Azevedo V."/>
            <person name="Bertero M.G."/>
            <person name="Bessieres P."/>
            <person name="Bolotin A."/>
            <person name="Borchert S."/>
            <person name="Borriss R."/>
            <person name="Boursier L."/>
            <person name="Brans A."/>
            <person name="Braun M."/>
            <person name="Brignell S.C."/>
            <person name="Bron S."/>
            <person name="Brouillet S."/>
            <person name="Bruschi C.V."/>
            <person name="Caldwell B."/>
            <person name="Capuano V."/>
            <person name="Carter N.M."/>
            <person name="Choi S.-K."/>
            <person name="Codani J.-J."/>
            <person name="Connerton I.F."/>
            <person name="Cummings N.J."/>
            <person name="Daniel R.A."/>
            <person name="Denizot F."/>
            <person name="Devine K.M."/>
            <person name="Duesterhoeft A."/>
            <person name="Ehrlich S.D."/>
            <person name="Emmerson P.T."/>
            <person name="Entian K.-D."/>
            <person name="Errington J."/>
            <person name="Fabret C."/>
            <person name="Ferrari E."/>
            <person name="Foulger D."/>
            <person name="Fritz C."/>
            <person name="Fujita M."/>
            <person name="Fujita Y."/>
            <person name="Fuma S."/>
            <person name="Galizzi A."/>
            <person name="Galleron N."/>
            <person name="Ghim S.-Y."/>
            <person name="Glaser P."/>
            <person name="Goffeau A."/>
            <person name="Golightly E.J."/>
            <person name="Grandi G."/>
            <person name="Guiseppi G."/>
            <person name="Guy B.J."/>
            <person name="Haga K."/>
            <person name="Haiech J."/>
            <person name="Harwood C.R."/>
            <person name="Henaut A."/>
            <person name="Hilbert H."/>
            <person name="Holsappel S."/>
            <person name="Hosono S."/>
            <person name="Hullo M.-F."/>
            <person name="Itaya M."/>
            <person name="Jones L.-M."/>
            <person name="Joris B."/>
            <person name="Karamata D."/>
            <person name="Kasahara Y."/>
            <person name="Klaerr-Blanchard M."/>
            <person name="Klein C."/>
            <person name="Kobayashi Y."/>
            <person name="Koetter P."/>
            <person name="Koningstein G."/>
            <person name="Krogh S."/>
            <person name="Kumano M."/>
            <person name="Kurita K."/>
            <person name="Lapidus A."/>
            <person name="Lardinois S."/>
            <person name="Lauber J."/>
            <person name="Lazarevic V."/>
            <person name="Lee S.-M."/>
            <person name="Levine A."/>
            <person name="Liu H."/>
            <person name="Masuda S."/>
            <person name="Mauel C."/>
            <person name="Medigue C."/>
            <person name="Medina N."/>
            <person name="Mellado R.P."/>
            <person name="Mizuno M."/>
            <person name="Moestl D."/>
            <person name="Nakai S."/>
            <person name="Noback M."/>
            <person name="Noone D."/>
            <person name="O'Reilly M."/>
            <person name="Ogawa K."/>
            <person name="Ogiwara A."/>
            <person name="Oudega B."/>
            <person name="Park S.-H."/>
            <person name="Parro V."/>
            <person name="Pohl T.M."/>
            <person name="Portetelle D."/>
            <person name="Porwollik S."/>
            <person name="Prescott A.M."/>
            <person name="Presecan E."/>
            <person name="Pujic P."/>
            <person name="Purnelle B."/>
            <person name="Rapoport G."/>
            <person name="Rey M."/>
            <person name="Reynolds S."/>
            <person name="Rieger M."/>
            <person name="Rivolta C."/>
            <person name="Rocha E."/>
            <person name="Roche B."/>
            <person name="Rose M."/>
            <person name="Sadaie Y."/>
            <person name="Sato T."/>
            <person name="Scanlan E."/>
            <person name="Schleich S."/>
            <person name="Schroeter R."/>
            <person name="Scoffone F."/>
            <person name="Sekiguchi J."/>
            <person name="Sekowska A."/>
            <person name="Seror S.J."/>
            <person name="Serror P."/>
            <person name="Shin B.-S."/>
            <person name="Soldo B."/>
            <person name="Sorokin A."/>
            <person name="Tacconi E."/>
            <person name="Takagi T."/>
            <person name="Takahashi H."/>
            <person name="Takemaru K."/>
            <person name="Takeuchi M."/>
            <person name="Tamakoshi A."/>
            <person name="Tanaka T."/>
            <person name="Terpstra P."/>
            <person name="Tognoni A."/>
            <person name="Tosato V."/>
            <person name="Uchiyama S."/>
            <person name="Vandenbol M."/>
            <person name="Vannier F."/>
            <person name="Vassarotti A."/>
            <person name="Viari A."/>
            <person name="Wambutt R."/>
            <person name="Wedler E."/>
            <person name="Wedler H."/>
            <person name="Weitzenegger T."/>
            <person name="Winters P."/>
            <person name="Wipat A."/>
            <person name="Yamamoto H."/>
            <person name="Yamane K."/>
            <person name="Yasumoto K."/>
            <person name="Yata K."/>
            <person name="Yoshida K."/>
            <person name="Yoshikawa H.-F."/>
            <person name="Zumstein E."/>
            <person name="Yoshikawa H."/>
            <person name="Danchin A."/>
        </authorList>
    </citation>
    <scope>NUCLEOTIDE SEQUENCE [LARGE SCALE GENOMIC DNA]</scope>
    <source>
        <strain>168</strain>
    </source>
</reference>
<evidence type="ECO:0000255" key="1"/>
<evidence type="ECO:0000305" key="2"/>
<dbReference type="EMBL" id="D26185">
    <property type="protein sequence ID" value="BAA05197.1"/>
    <property type="molecule type" value="Genomic_DNA"/>
</dbReference>
<dbReference type="EMBL" id="AL009126">
    <property type="protein sequence ID" value="CAB16103.1"/>
    <property type="molecule type" value="Genomic_DNA"/>
</dbReference>
<dbReference type="PIR" id="S65991">
    <property type="entry name" value="S65991"/>
</dbReference>
<dbReference type="RefSeq" id="NP_391946.1">
    <property type="nucleotide sequence ID" value="NC_000964.3"/>
</dbReference>
<dbReference type="RefSeq" id="WP_003243239.1">
    <property type="nucleotide sequence ID" value="NZ_OZ025638.1"/>
</dbReference>
<dbReference type="SMR" id="P37498"/>
<dbReference type="FunCoup" id="P37498">
    <property type="interactions" value="90"/>
</dbReference>
<dbReference type="STRING" id="224308.BSU40660"/>
<dbReference type="PaxDb" id="224308-BSU40660"/>
<dbReference type="EnsemblBacteria" id="CAB16103">
    <property type="protein sequence ID" value="CAB16103"/>
    <property type="gene ID" value="BSU_40660"/>
</dbReference>
<dbReference type="GeneID" id="937854"/>
<dbReference type="KEGG" id="bsu:BSU40660"/>
<dbReference type="PATRIC" id="fig|224308.179.peg.4408"/>
<dbReference type="eggNOG" id="COG2814">
    <property type="taxonomic scope" value="Bacteria"/>
</dbReference>
<dbReference type="InParanoid" id="P37498"/>
<dbReference type="OrthoDB" id="63984at2"/>
<dbReference type="PhylomeDB" id="P37498"/>
<dbReference type="BioCyc" id="BSUB:BSU40660-MONOMER"/>
<dbReference type="Proteomes" id="UP000001570">
    <property type="component" value="Chromosome"/>
</dbReference>
<dbReference type="GO" id="GO:0005886">
    <property type="term" value="C:plasma membrane"/>
    <property type="evidence" value="ECO:0007669"/>
    <property type="project" value="UniProtKB-SubCell"/>
</dbReference>
<dbReference type="GO" id="GO:0022857">
    <property type="term" value="F:transmembrane transporter activity"/>
    <property type="evidence" value="ECO:0007669"/>
    <property type="project" value="InterPro"/>
</dbReference>
<dbReference type="CDD" id="cd17324">
    <property type="entry name" value="MFS_NepI_like"/>
    <property type="match status" value="1"/>
</dbReference>
<dbReference type="Gene3D" id="1.20.1250.20">
    <property type="entry name" value="MFS general substrate transporter like domains"/>
    <property type="match status" value="1"/>
</dbReference>
<dbReference type="InterPro" id="IPR011701">
    <property type="entry name" value="MFS"/>
</dbReference>
<dbReference type="InterPro" id="IPR020846">
    <property type="entry name" value="MFS_dom"/>
</dbReference>
<dbReference type="InterPro" id="IPR036259">
    <property type="entry name" value="MFS_trans_sf"/>
</dbReference>
<dbReference type="PANTHER" id="PTHR43271">
    <property type="entry name" value="BLL2771 PROTEIN"/>
    <property type="match status" value="1"/>
</dbReference>
<dbReference type="PANTHER" id="PTHR43271:SF1">
    <property type="entry name" value="INNER MEMBRANE TRANSPORT PROTEIN YNFM"/>
    <property type="match status" value="1"/>
</dbReference>
<dbReference type="Pfam" id="PF07690">
    <property type="entry name" value="MFS_1"/>
    <property type="match status" value="1"/>
</dbReference>
<dbReference type="SUPFAM" id="SSF103473">
    <property type="entry name" value="MFS general substrate transporter"/>
    <property type="match status" value="1"/>
</dbReference>
<dbReference type="PROSITE" id="PS50850">
    <property type="entry name" value="MFS"/>
    <property type="match status" value="1"/>
</dbReference>
<sequence>MTYIRKGTPVFRKITFAFFAAGFNTFAILYCVQPLMEEFTREFHVTPTAASLSLSVTTMLLAVSMLVFGSLSEVWGRKPIMGISMLAASVLCLASAFSPSFHTLLVLRTIQGVALAGLPSIAMAYLGEEIEPGSLGSAMGLYISGNAIGAVFGRIVSGLLSEYLNWHMAMGTIGVISLIASVIFFINLPPSRHFTPRKLKLGKLGMSLIGHLRDRKLFSLFLIGFLLLGSNVALFNYIVYVLLGPPYSLNKAFSSWIFIVMIVGIFSSSFIGRMVDRYGYPKILVMNIFIVIAGALFTINNMLAVKILGIALFTFGFFGGHSVASSWVGRRALHNKAQASSLYLFFYYAGSSVFGTIGGLFWSGFHWLGVVGMITFMLLVALWLSGYLARSVKMPDKRNEKGLN</sequence>
<organism>
    <name type="scientific">Bacillus subtilis (strain 168)</name>
    <dbReference type="NCBI Taxonomy" id="224308"/>
    <lineage>
        <taxon>Bacteria</taxon>
        <taxon>Bacillati</taxon>
        <taxon>Bacillota</taxon>
        <taxon>Bacilli</taxon>
        <taxon>Bacillales</taxon>
        <taxon>Bacillaceae</taxon>
        <taxon>Bacillus</taxon>
    </lineage>
</organism>
<comment type="subcellular location">
    <subcellularLocation>
        <location evidence="2">Cell membrane</location>
        <topology evidence="2">Multi-pass membrane protein</topology>
    </subcellularLocation>
</comment>
<comment type="similarity">
    <text evidence="2">Belongs to the major facilitator superfamily.</text>
</comment>
<accession>P37498</accession>
<feature type="chain" id="PRO_0000173419" description="Uncharacterized MFS-type transporter YybF">
    <location>
        <begin position="1"/>
        <end position="404"/>
    </location>
</feature>
<feature type="transmembrane region" description="Helical" evidence="1">
    <location>
        <begin position="16"/>
        <end position="36"/>
    </location>
</feature>
<feature type="transmembrane region" description="Helical" evidence="1">
    <location>
        <begin position="49"/>
        <end position="69"/>
    </location>
</feature>
<feature type="transmembrane region" description="Helical" evidence="1">
    <location>
        <begin position="79"/>
        <end position="99"/>
    </location>
</feature>
<feature type="transmembrane region" description="Helical" evidence="1">
    <location>
        <begin position="110"/>
        <end position="130"/>
    </location>
</feature>
<feature type="transmembrane region" description="Helical" evidence="1">
    <location>
        <begin position="133"/>
        <end position="153"/>
    </location>
</feature>
<feature type="transmembrane region" description="Helical" evidence="1">
    <location>
        <begin position="166"/>
        <end position="186"/>
    </location>
</feature>
<feature type="transmembrane region" description="Helical" evidence="1">
    <location>
        <begin position="221"/>
        <end position="241"/>
    </location>
</feature>
<feature type="transmembrane region" description="Helical" evidence="1">
    <location>
        <begin position="252"/>
        <end position="272"/>
    </location>
</feature>
<feature type="transmembrane region" description="Helical" evidence="1">
    <location>
        <begin position="283"/>
        <end position="303"/>
    </location>
</feature>
<feature type="transmembrane region" description="Helical" evidence="1">
    <location>
        <begin position="307"/>
        <end position="327"/>
    </location>
</feature>
<feature type="transmembrane region" description="Helical" evidence="1">
    <location>
        <begin position="342"/>
        <end position="362"/>
    </location>
</feature>
<feature type="transmembrane region" description="Helical" evidence="1">
    <location>
        <begin position="364"/>
        <end position="384"/>
    </location>
</feature>
<protein>
    <recommendedName>
        <fullName>Uncharacterized MFS-type transporter YybF</fullName>
    </recommendedName>
</protein>
<proteinExistence type="inferred from homology"/>
<keyword id="KW-1003">Cell membrane</keyword>
<keyword id="KW-0472">Membrane</keyword>
<keyword id="KW-1185">Reference proteome</keyword>
<keyword id="KW-0812">Transmembrane</keyword>
<keyword id="KW-1133">Transmembrane helix</keyword>
<keyword id="KW-0813">Transport</keyword>
<gene>
    <name type="primary">yybF</name>
    <name type="ordered locus">BSU40660</name>
</gene>